<feature type="chain" id="PRO_0000365987" description="Eukaryotic translation initiation factor 3 subunit E">
    <location>
        <begin position="1"/>
        <end position="448"/>
    </location>
</feature>
<feature type="domain" description="PCI" evidence="2">
    <location>
        <begin position="254"/>
        <end position="423"/>
    </location>
</feature>
<comment type="function">
    <text evidence="1">Component of the eukaryotic translation initiation factor 3 (eIF-3) complex, which is involved in protein synthesis of a specialized repertoire of mRNAs and, together with other initiation factors, stimulates binding of mRNA and methionyl-tRNAi to the 40S ribosome. The eIF-3 complex specifically targets and initiates translation of a subset of mRNAs involved in cell proliferation.</text>
</comment>
<comment type="subunit">
    <text evidence="1">Component of the eukaryotic translation initiation factor 3 (eIF-3) complex.</text>
</comment>
<comment type="subcellular location">
    <subcellularLocation>
        <location evidence="1">Cytoplasm</location>
    </subcellularLocation>
</comment>
<comment type="similarity">
    <text evidence="1">Belongs to the eIF-3 subunit E family.</text>
</comment>
<protein>
    <recommendedName>
        <fullName evidence="1">Eukaryotic translation initiation factor 3 subunit E</fullName>
        <shortName evidence="1">eIF3e</shortName>
    </recommendedName>
</protein>
<reference key="1">
    <citation type="journal article" date="2005" name="Nature">
        <title>Sequencing of Aspergillus nidulans and comparative analysis with A. fumigatus and A. oryzae.</title>
        <authorList>
            <person name="Galagan J.E."/>
            <person name="Calvo S.E."/>
            <person name="Cuomo C."/>
            <person name="Ma L.-J."/>
            <person name="Wortman J.R."/>
            <person name="Batzoglou S."/>
            <person name="Lee S.-I."/>
            <person name="Bastuerkmen M."/>
            <person name="Spevak C.C."/>
            <person name="Clutterbuck J."/>
            <person name="Kapitonov V."/>
            <person name="Jurka J."/>
            <person name="Scazzocchio C."/>
            <person name="Farman M.L."/>
            <person name="Butler J."/>
            <person name="Purcell S."/>
            <person name="Harris S."/>
            <person name="Braus G.H."/>
            <person name="Draht O."/>
            <person name="Busch S."/>
            <person name="D'Enfert C."/>
            <person name="Bouchier C."/>
            <person name="Goldman G.H."/>
            <person name="Bell-Pedersen D."/>
            <person name="Griffiths-Jones S."/>
            <person name="Doonan J.H."/>
            <person name="Yu J."/>
            <person name="Vienken K."/>
            <person name="Pain A."/>
            <person name="Freitag M."/>
            <person name="Selker E.U."/>
            <person name="Archer D.B."/>
            <person name="Penalva M.A."/>
            <person name="Oakley B.R."/>
            <person name="Momany M."/>
            <person name="Tanaka T."/>
            <person name="Kumagai T."/>
            <person name="Asai K."/>
            <person name="Machida M."/>
            <person name="Nierman W.C."/>
            <person name="Denning D.W."/>
            <person name="Caddick M.X."/>
            <person name="Hynes M."/>
            <person name="Paoletti M."/>
            <person name="Fischer R."/>
            <person name="Miller B.L."/>
            <person name="Dyer P.S."/>
            <person name="Sachs M.S."/>
            <person name="Osmani S.A."/>
            <person name="Birren B.W."/>
        </authorList>
    </citation>
    <scope>NUCLEOTIDE SEQUENCE [LARGE SCALE GENOMIC DNA]</scope>
    <source>
        <strain>FGSC A4 / ATCC 38163 / CBS 112.46 / NRRL 194 / M139</strain>
    </source>
</reference>
<reference key="2">
    <citation type="journal article" date="2009" name="Fungal Genet. Biol.">
        <title>The 2008 update of the Aspergillus nidulans genome annotation: a community effort.</title>
        <authorList>
            <person name="Wortman J.R."/>
            <person name="Gilsenan J.M."/>
            <person name="Joardar V."/>
            <person name="Deegan J."/>
            <person name="Clutterbuck J."/>
            <person name="Andersen M.R."/>
            <person name="Archer D."/>
            <person name="Bencina M."/>
            <person name="Braus G."/>
            <person name="Coutinho P."/>
            <person name="von Dohren H."/>
            <person name="Doonan J."/>
            <person name="Driessen A.J."/>
            <person name="Durek P."/>
            <person name="Espeso E."/>
            <person name="Fekete E."/>
            <person name="Flipphi M."/>
            <person name="Estrada C.G."/>
            <person name="Geysens S."/>
            <person name="Goldman G."/>
            <person name="de Groot P.W."/>
            <person name="Hansen K."/>
            <person name="Harris S.D."/>
            <person name="Heinekamp T."/>
            <person name="Helmstaedt K."/>
            <person name="Henrissat B."/>
            <person name="Hofmann G."/>
            <person name="Homan T."/>
            <person name="Horio T."/>
            <person name="Horiuchi H."/>
            <person name="James S."/>
            <person name="Jones M."/>
            <person name="Karaffa L."/>
            <person name="Karanyi Z."/>
            <person name="Kato M."/>
            <person name="Keller N."/>
            <person name="Kelly D.E."/>
            <person name="Kiel J.A."/>
            <person name="Kim J.M."/>
            <person name="van der Klei I.J."/>
            <person name="Klis F.M."/>
            <person name="Kovalchuk A."/>
            <person name="Krasevec N."/>
            <person name="Kubicek C.P."/>
            <person name="Liu B."/>
            <person name="Maccabe A."/>
            <person name="Meyer V."/>
            <person name="Mirabito P."/>
            <person name="Miskei M."/>
            <person name="Mos M."/>
            <person name="Mullins J."/>
            <person name="Nelson D.R."/>
            <person name="Nielsen J."/>
            <person name="Oakley B.R."/>
            <person name="Osmani S.A."/>
            <person name="Pakula T."/>
            <person name="Paszewski A."/>
            <person name="Paulsen I."/>
            <person name="Pilsyk S."/>
            <person name="Pocsi I."/>
            <person name="Punt P.J."/>
            <person name="Ram A.F."/>
            <person name="Ren Q."/>
            <person name="Robellet X."/>
            <person name="Robson G."/>
            <person name="Seiboth B."/>
            <person name="van Solingen P."/>
            <person name="Specht T."/>
            <person name="Sun J."/>
            <person name="Taheri-Talesh N."/>
            <person name="Takeshita N."/>
            <person name="Ussery D."/>
            <person name="vanKuyk P.A."/>
            <person name="Visser H."/>
            <person name="van de Vondervoort P.J."/>
            <person name="de Vries R.P."/>
            <person name="Walton J."/>
            <person name="Xiang X."/>
            <person name="Xiong Y."/>
            <person name="Zeng A.P."/>
            <person name="Brandt B.W."/>
            <person name="Cornell M.J."/>
            <person name="van den Hondel C.A."/>
            <person name="Visser J."/>
            <person name="Oliver S.G."/>
            <person name="Turner G."/>
        </authorList>
    </citation>
    <scope>GENOME REANNOTATION</scope>
    <source>
        <strain>FGSC A4 / ATCC 38163 / CBS 112.46 / NRRL 194 / M139</strain>
    </source>
</reference>
<keyword id="KW-0963">Cytoplasm</keyword>
<keyword id="KW-0396">Initiation factor</keyword>
<keyword id="KW-0648">Protein biosynthesis</keyword>
<keyword id="KW-1185">Reference proteome</keyword>
<evidence type="ECO:0000255" key="1">
    <source>
        <dbReference type="HAMAP-Rule" id="MF_03004"/>
    </source>
</evidence>
<evidence type="ECO:0000255" key="2">
    <source>
        <dbReference type="PROSITE-ProRule" id="PRU01185"/>
    </source>
</evidence>
<gene>
    <name type="primary">int6</name>
    <name type="ORF">AN2907</name>
</gene>
<accession>Q5B973</accession>
<accession>C8VJ76</accession>
<organism>
    <name type="scientific">Emericella nidulans (strain FGSC A4 / ATCC 38163 / CBS 112.46 / NRRL 194 / M139)</name>
    <name type="common">Aspergillus nidulans</name>
    <dbReference type="NCBI Taxonomy" id="227321"/>
    <lineage>
        <taxon>Eukaryota</taxon>
        <taxon>Fungi</taxon>
        <taxon>Dikarya</taxon>
        <taxon>Ascomycota</taxon>
        <taxon>Pezizomycotina</taxon>
        <taxon>Eurotiomycetes</taxon>
        <taxon>Eurotiomycetidae</taxon>
        <taxon>Eurotiales</taxon>
        <taxon>Aspergillaceae</taxon>
        <taxon>Aspergillus</taxon>
        <taxon>Aspergillus subgen. Nidulantes</taxon>
    </lineage>
</organism>
<name>EIF3E_EMENI</name>
<dbReference type="EMBL" id="AACD01000051">
    <property type="protein sequence ID" value="EAA63478.1"/>
    <property type="molecule type" value="Genomic_DNA"/>
</dbReference>
<dbReference type="EMBL" id="BN001306">
    <property type="protein sequence ID" value="CBF83772.1"/>
    <property type="molecule type" value="Genomic_DNA"/>
</dbReference>
<dbReference type="RefSeq" id="XP_660511.1">
    <property type="nucleotide sequence ID" value="XM_655419.1"/>
</dbReference>
<dbReference type="SMR" id="Q5B973"/>
<dbReference type="STRING" id="227321.Q5B973"/>
<dbReference type="EnsemblFungi" id="CBF83772">
    <property type="protein sequence ID" value="CBF83772"/>
    <property type="gene ID" value="ANIA_02907"/>
</dbReference>
<dbReference type="KEGG" id="ani:ANIA_02907"/>
<dbReference type="eggNOG" id="KOG2758">
    <property type="taxonomic scope" value="Eukaryota"/>
</dbReference>
<dbReference type="HOGENOM" id="CLU_031132_0_0_1"/>
<dbReference type="InParanoid" id="Q5B973"/>
<dbReference type="OMA" id="NCPWILR"/>
<dbReference type="OrthoDB" id="417252at2759"/>
<dbReference type="Proteomes" id="UP000000560">
    <property type="component" value="Chromosome VI"/>
</dbReference>
<dbReference type="GO" id="GO:0016282">
    <property type="term" value="C:eukaryotic 43S preinitiation complex"/>
    <property type="evidence" value="ECO:0007669"/>
    <property type="project" value="UniProtKB-UniRule"/>
</dbReference>
<dbReference type="GO" id="GO:0033290">
    <property type="term" value="C:eukaryotic 48S preinitiation complex"/>
    <property type="evidence" value="ECO:0007669"/>
    <property type="project" value="UniProtKB-UniRule"/>
</dbReference>
<dbReference type="GO" id="GO:0005852">
    <property type="term" value="C:eukaryotic translation initiation factor 3 complex"/>
    <property type="evidence" value="ECO:0000318"/>
    <property type="project" value="GO_Central"/>
</dbReference>
<dbReference type="GO" id="GO:0071540">
    <property type="term" value="C:eukaryotic translation initiation factor 3 complex, eIF3e"/>
    <property type="evidence" value="ECO:0007669"/>
    <property type="project" value="UniProtKB-UniRule"/>
</dbReference>
<dbReference type="GO" id="GO:0005634">
    <property type="term" value="C:nucleus"/>
    <property type="evidence" value="ECO:0000318"/>
    <property type="project" value="GO_Central"/>
</dbReference>
<dbReference type="GO" id="GO:0003743">
    <property type="term" value="F:translation initiation factor activity"/>
    <property type="evidence" value="ECO:0007669"/>
    <property type="project" value="UniProtKB-UniRule"/>
</dbReference>
<dbReference type="GO" id="GO:0001732">
    <property type="term" value="P:formation of cytoplasmic translation initiation complex"/>
    <property type="evidence" value="ECO:0007669"/>
    <property type="project" value="UniProtKB-UniRule"/>
</dbReference>
<dbReference type="GO" id="GO:0006413">
    <property type="term" value="P:translational initiation"/>
    <property type="evidence" value="ECO:0000318"/>
    <property type="project" value="GO_Central"/>
</dbReference>
<dbReference type="CDD" id="cd21378">
    <property type="entry name" value="eIF3E"/>
    <property type="match status" value="1"/>
</dbReference>
<dbReference type="HAMAP" id="MF_03004">
    <property type="entry name" value="eIF3e"/>
    <property type="match status" value="1"/>
</dbReference>
<dbReference type="InterPro" id="IPR016650">
    <property type="entry name" value="eIF3e"/>
</dbReference>
<dbReference type="InterPro" id="IPR019010">
    <property type="entry name" value="eIF3e_N"/>
</dbReference>
<dbReference type="InterPro" id="IPR000717">
    <property type="entry name" value="PCI_dom"/>
</dbReference>
<dbReference type="InterPro" id="IPR036390">
    <property type="entry name" value="WH_DNA-bd_sf"/>
</dbReference>
<dbReference type="PANTHER" id="PTHR10317">
    <property type="entry name" value="EUKARYOTIC TRANSLATION INITIATION FACTOR 3 SUBUNIT E"/>
    <property type="match status" value="1"/>
</dbReference>
<dbReference type="Pfam" id="PF09440">
    <property type="entry name" value="eIF3_N"/>
    <property type="match status" value="1"/>
</dbReference>
<dbReference type="Pfam" id="PF21357">
    <property type="entry name" value="EIF3E_C"/>
    <property type="match status" value="1"/>
</dbReference>
<dbReference type="Pfam" id="PF01399">
    <property type="entry name" value="PCI"/>
    <property type="match status" value="1"/>
</dbReference>
<dbReference type="PIRSF" id="PIRSF016255">
    <property type="entry name" value="eIF3e_su6"/>
    <property type="match status" value="1"/>
</dbReference>
<dbReference type="SMART" id="SM01186">
    <property type="entry name" value="eIF3_N"/>
    <property type="match status" value="1"/>
</dbReference>
<dbReference type="SMART" id="SM00088">
    <property type="entry name" value="PINT"/>
    <property type="match status" value="1"/>
</dbReference>
<dbReference type="SUPFAM" id="SSF46785">
    <property type="entry name" value="Winged helix' DNA-binding domain"/>
    <property type="match status" value="1"/>
</dbReference>
<dbReference type="PROSITE" id="PS50250">
    <property type="entry name" value="PCI"/>
    <property type="match status" value="1"/>
</dbReference>
<sequence>MAANVPPSAEALTSGGAAHKTAEDIANQYDLLPKLIPYLDRHLVFPLLEFSSGQDDDSEIVRAKYELLKHTNMTDYVANLWQEINNSDTIPDEFVKKREEVLAKLQHYQNESEKITELLQDEAVVGNLRSDKVANLRFLEEQHGVTIEMVNSLYDYGRFQYSCGSYGNAAELLYQFRVLSTDNDKVASATWGKLASEILTTNWEAAMEEVQKAKDSIETRLFNNPVGQLHNRSWLIHWSLFPFFNHDPARDVLTDLFFSPAYINTIQTSCPWILRYLAAAVITNRNRAHKNSSVYQKQLKDLIRVVRQEGYEYSDPITDFVKALYVDFDFEEAQKKLGEAEEVLRGDFFLVSAADAFVEAARHLISESYCKIHQRIDIKDLSTRLGLNQDEGEKWIVNLIRDTRVDAKIDYKEGTVIMNHPPQSVYQQVIEKTKGAFFRTQVLRFVAS</sequence>
<proteinExistence type="inferred from homology"/>